<proteinExistence type="inferred from homology"/>
<protein>
    <recommendedName>
        <fullName>Tegument protein UL14 homolog</fullName>
    </recommendedName>
</protein>
<keyword id="KW-1035">Host cytoplasm</keyword>
<keyword id="KW-1048">Host nucleus</keyword>
<keyword id="KW-0946">Virion</keyword>
<keyword id="KW-0920">Virion tegument</keyword>
<evidence type="ECO:0000250" key="1"/>
<evidence type="ECO:0000256" key="2">
    <source>
        <dbReference type="SAM" id="MobiDB-lite"/>
    </source>
</evidence>
<evidence type="ECO:0000305" key="3"/>
<evidence type="ECO:0000312" key="4">
    <source>
        <dbReference type="EMBL" id="AAS45932.1"/>
    </source>
</evidence>
<organismHost>
    <name type="scientific">Equus caballus</name>
    <name type="common">Horse</name>
    <dbReference type="NCBI Taxonomy" id="9796"/>
</organismHost>
<name>TEG3_EHV1V</name>
<gene>
    <name type="ordered locus">48</name>
</gene>
<accession>P84404</accession>
<accession>Q6S6S4</accession>
<organism>
    <name type="scientific">Equine herpesvirus 1 (strain V592)</name>
    <name type="common">EHV-1</name>
    <name type="synonym">Equine abortion virus</name>
    <dbReference type="NCBI Taxonomy" id="310273"/>
    <lineage>
        <taxon>Viruses</taxon>
        <taxon>Duplodnaviria</taxon>
        <taxon>Heunggongvirae</taxon>
        <taxon>Peploviricota</taxon>
        <taxon>Herviviricetes</taxon>
        <taxon>Herpesvirales</taxon>
        <taxon>Orthoherpesviridae</taxon>
        <taxon>Alphaherpesvirinae</taxon>
        <taxon>Varicellovirus</taxon>
        <taxon>Varicellovirus equidalpha1</taxon>
        <taxon>Equid alphaherpesvirus 1</taxon>
    </lineage>
</organism>
<reference evidence="3 4" key="1">
    <citation type="submission" date="2003-11" db="EMBL/GenBank/DDBJ databases">
        <authorList>
            <person name="Davis-Poynter N."/>
            <person name="Nugent J."/>
            <person name="Birch-Machin I."/>
            <person name="Allen G.P."/>
        </authorList>
    </citation>
    <scope>NUCLEOTIDE SEQUENCE [LARGE SCALE GENOMIC DNA]</scope>
</reference>
<sequence length="317" mass="35816">MSFSARSRRQRLQLEEAYQREMIFKMHTLDLVREGVNKRSPAFVRAFTSAKEASLDLDRYMQAHSRVGRVEQNARALAQRVEAQAAVGEILDRHRRFLHPDFIDNFDSREDSIVEREERLGDVLSDINCDGGGGEVGDPQEWLGHEDEALLMRWMLEEAPRVSTRIAADPHSPRSTCPAPRKAPEDARCGARKPGEVNNYTPSAQPRSQETTVDHLASPDEGTRLGDRTRDLEHHSTAPMRTHPNVLASERRRLGVVHQREKSSESQESATRSKAIVGQEDQKWLGGIPPLSDEELQVDMGIPTMNGPIYPDYHRTA</sequence>
<feature type="chain" id="PRO_0000115937" description="Tegument protein UL14 homolog">
    <location>
        <begin position="1"/>
        <end position="317"/>
    </location>
</feature>
<feature type="region of interest" description="Disordered" evidence="2">
    <location>
        <begin position="166"/>
        <end position="291"/>
    </location>
</feature>
<feature type="compositionally biased region" description="Basic and acidic residues" evidence="2">
    <location>
        <begin position="182"/>
        <end position="195"/>
    </location>
</feature>
<feature type="compositionally biased region" description="Polar residues" evidence="2">
    <location>
        <begin position="198"/>
        <end position="211"/>
    </location>
</feature>
<feature type="compositionally biased region" description="Basic and acidic residues" evidence="2">
    <location>
        <begin position="217"/>
        <end position="236"/>
    </location>
</feature>
<feature type="compositionally biased region" description="Basic and acidic residues" evidence="2">
    <location>
        <begin position="249"/>
        <end position="265"/>
    </location>
</feature>
<comment type="function">
    <text evidence="1">Contributes to the nuclear transport of the viral transcriptional activator VP16 during the early phase of infection. Therefore, participates indirectly in the regulation of the immediate-early gene expression. Additionally, seems to be important for efficient nuclear targeting of capsids (By similarity).</text>
</comment>
<comment type="subcellular location">
    <subcellularLocation>
        <location evidence="1">Virion tegument</location>
    </subcellularLocation>
    <subcellularLocation>
        <location evidence="1">Host cytoplasm</location>
    </subcellularLocation>
    <subcellularLocation>
        <location evidence="1">Host nucleus</location>
    </subcellularLocation>
</comment>
<comment type="similarity">
    <text evidence="3">Belongs to the alphaherpesvirinae HHV-1 UL14 protein family.</text>
</comment>
<dbReference type="EMBL" id="AY464052">
    <property type="protein sequence ID" value="AAS45932.1"/>
    <property type="molecule type" value="Genomic_DNA"/>
</dbReference>
<dbReference type="SMR" id="P84404"/>
<dbReference type="KEGG" id="vg:1487539"/>
<dbReference type="Proteomes" id="UP000008296">
    <property type="component" value="Segment"/>
</dbReference>
<dbReference type="GO" id="GO:0030430">
    <property type="term" value="C:host cell cytoplasm"/>
    <property type="evidence" value="ECO:0007669"/>
    <property type="project" value="UniProtKB-SubCell"/>
</dbReference>
<dbReference type="GO" id="GO:0042025">
    <property type="term" value="C:host cell nucleus"/>
    <property type="evidence" value="ECO:0007669"/>
    <property type="project" value="UniProtKB-SubCell"/>
</dbReference>
<dbReference type="GO" id="GO:0019033">
    <property type="term" value="C:viral tegument"/>
    <property type="evidence" value="ECO:0007669"/>
    <property type="project" value="UniProtKB-SubCell"/>
</dbReference>
<dbReference type="InterPro" id="IPR005207">
    <property type="entry name" value="Herpes_UL14"/>
</dbReference>
<dbReference type="Pfam" id="PF03580">
    <property type="entry name" value="Herpes_UL14"/>
    <property type="match status" value="1"/>
</dbReference>